<accession>A1JT50</accession>
<reference key="1">
    <citation type="journal article" date="2006" name="PLoS Genet.">
        <title>The complete genome sequence and comparative genome analysis of the high pathogenicity Yersinia enterocolitica strain 8081.</title>
        <authorList>
            <person name="Thomson N.R."/>
            <person name="Howard S."/>
            <person name="Wren B.W."/>
            <person name="Holden M.T.G."/>
            <person name="Crossman L."/>
            <person name="Challis G.L."/>
            <person name="Churcher C."/>
            <person name="Mungall K."/>
            <person name="Brooks K."/>
            <person name="Chillingworth T."/>
            <person name="Feltwell T."/>
            <person name="Abdellah Z."/>
            <person name="Hauser H."/>
            <person name="Jagels K."/>
            <person name="Maddison M."/>
            <person name="Moule S."/>
            <person name="Sanders M."/>
            <person name="Whitehead S."/>
            <person name="Quail M.A."/>
            <person name="Dougan G."/>
            <person name="Parkhill J."/>
            <person name="Prentice M.B."/>
        </authorList>
    </citation>
    <scope>NUCLEOTIDE SEQUENCE [LARGE SCALE GENOMIC DNA]</scope>
    <source>
        <strain>NCTC 13174 / 8081</strain>
    </source>
</reference>
<dbReference type="EC" id="6.1.1.14" evidence="1"/>
<dbReference type="EMBL" id="AM286415">
    <property type="protein sequence ID" value="CAL14166.1"/>
    <property type="molecule type" value="Genomic_DNA"/>
</dbReference>
<dbReference type="RefSeq" id="WP_011817445.1">
    <property type="nucleotide sequence ID" value="NC_008800.1"/>
</dbReference>
<dbReference type="RefSeq" id="YP_001008285.1">
    <property type="nucleotide sequence ID" value="NC_008800.1"/>
</dbReference>
<dbReference type="SMR" id="A1JT50"/>
<dbReference type="DNASU" id="4716544"/>
<dbReference type="KEGG" id="yen:YE4150"/>
<dbReference type="PATRIC" id="fig|393305.7.peg.4418"/>
<dbReference type="eggNOG" id="COG0751">
    <property type="taxonomic scope" value="Bacteria"/>
</dbReference>
<dbReference type="HOGENOM" id="CLU_007220_2_2_6"/>
<dbReference type="OrthoDB" id="9775440at2"/>
<dbReference type="Proteomes" id="UP000000642">
    <property type="component" value="Chromosome"/>
</dbReference>
<dbReference type="GO" id="GO:0005829">
    <property type="term" value="C:cytosol"/>
    <property type="evidence" value="ECO:0007669"/>
    <property type="project" value="TreeGrafter"/>
</dbReference>
<dbReference type="GO" id="GO:0004814">
    <property type="term" value="F:arginine-tRNA ligase activity"/>
    <property type="evidence" value="ECO:0007669"/>
    <property type="project" value="InterPro"/>
</dbReference>
<dbReference type="GO" id="GO:0005524">
    <property type="term" value="F:ATP binding"/>
    <property type="evidence" value="ECO:0007669"/>
    <property type="project" value="UniProtKB-UniRule"/>
</dbReference>
<dbReference type="GO" id="GO:0004820">
    <property type="term" value="F:glycine-tRNA ligase activity"/>
    <property type="evidence" value="ECO:0007669"/>
    <property type="project" value="UniProtKB-UniRule"/>
</dbReference>
<dbReference type="GO" id="GO:0006420">
    <property type="term" value="P:arginyl-tRNA aminoacylation"/>
    <property type="evidence" value="ECO:0007669"/>
    <property type="project" value="InterPro"/>
</dbReference>
<dbReference type="GO" id="GO:0006426">
    <property type="term" value="P:glycyl-tRNA aminoacylation"/>
    <property type="evidence" value="ECO:0007669"/>
    <property type="project" value="UniProtKB-UniRule"/>
</dbReference>
<dbReference type="HAMAP" id="MF_00255">
    <property type="entry name" value="Gly_tRNA_synth_beta"/>
    <property type="match status" value="1"/>
</dbReference>
<dbReference type="InterPro" id="IPR008909">
    <property type="entry name" value="DALR_anticod-bd"/>
</dbReference>
<dbReference type="InterPro" id="IPR015944">
    <property type="entry name" value="Gly-tRNA-synth_bsu"/>
</dbReference>
<dbReference type="InterPro" id="IPR006194">
    <property type="entry name" value="Gly-tRNA-synth_heterodimer"/>
</dbReference>
<dbReference type="NCBIfam" id="TIGR00211">
    <property type="entry name" value="glyS"/>
    <property type="match status" value="1"/>
</dbReference>
<dbReference type="PANTHER" id="PTHR30075:SF2">
    <property type="entry name" value="GLYCINE--TRNA LIGASE, CHLOROPLASTIC_MITOCHONDRIAL 2"/>
    <property type="match status" value="1"/>
</dbReference>
<dbReference type="PANTHER" id="PTHR30075">
    <property type="entry name" value="GLYCYL-TRNA SYNTHETASE"/>
    <property type="match status" value="1"/>
</dbReference>
<dbReference type="Pfam" id="PF05746">
    <property type="entry name" value="DALR_1"/>
    <property type="match status" value="1"/>
</dbReference>
<dbReference type="Pfam" id="PF02092">
    <property type="entry name" value="tRNA_synt_2f"/>
    <property type="match status" value="1"/>
</dbReference>
<dbReference type="PRINTS" id="PR01045">
    <property type="entry name" value="TRNASYNTHGB"/>
</dbReference>
<dbReference type="SUPFAM" id="SSF109604">
    <property type="entry name" value="HD-domain/PDEase-like"/>
    <property type="match status" value="1"/>
</dbReference>
<dbReference type="PROSITE" id="PS50861">
    <property type="entry name" value="AA_TRNA_LIGASE_II_GLYAB"/>
    <property type="match status" value="1"/>
</dbReference>
<name>SYGB_YERE8</name>
<gene>
    <name evidence="1" type="primary">glyS</name>
    <name type="ordered locus">YE4150</name>
</gene>
<sequence>MTQQTFLVEIGTEELPPKALRSLAESFAANFTAELNNANLPYGEVIWYAAPRRLALKVTNLSATQADREVEKRGPAIAQAFDAEGKPSKAAEGWARGCGITVDQAERLVTDKGEWLLYRAHVKGQSAQLLLAGMVNTALSKLPIPKLMRWGDKDTQFVRPVHTVTMLLGSEVIPGTVLGIDSDRIIRGHRFMGEPEFTLDNADQYPQVLQERGKVIADYELRKAIIKRDAELAAQKIGGVADLSESLLEEVASLVEWPVVLTAKFEEKFLAVPAEALVYTMKGDQKYFPVYDTAGNLLPNFIFVANIESKDPQQIISGNEKVVRPRLADAEFFFKTDRKKRLEDNLPRLETVLFQQQLGTLRDKTDRIQALAGWVAAQIGADVNHATRAGLLSKCDLMTNMVFEFTDTQGVMGMHYARHDGEAEDVAVALNEQYQPRFAGDDLPSNPVACALAIADKMDTLAGIFGIGQHPKGDKDPFALRRAALGVLRIIVEKNLPLDLQTLTEEAVRLYGSKLTNTKVVDEVIEFMLGRFRAWYQDEGHSVDTIQAVLARRPTRPADFDARVKAVTYFRTLDAAAALAAANKRVSNILAKSTDKLNDHVRASVLKEPAELKLATHLVVLRDKLEPVFAAGQYQEALVELAALRETVDEFFESVMVMDEDDAVRVNRLTLLSKLRELFLQVADISLLQ</sequence>
<keyword id="KW-0030">Aminoacyl-tRNA synthetase</keyword>
<keyword id="KW-0067">ATP-binding</keyword>
<keyword id="KW-0963">Cytoplasm</keyword>
<keyword id="KW-0436">Ligase</keyword>
<keyword id="KW-0547">Nucleotide-binding</keyword>
<keyword id="KW-0648">Protein biosynthesis</keyword>
<proteinExistence type="inferred from homology"/>
<comment type="catalytic activity">
    <reaction evidence="1">
        <text>tRNA(Gly) + glycine + ATP = glycyl-tRNA(Gly) + AMP + diphosphate</text>
        <dbReference type="Rhea" id="RHEA:16013"/>
        <dbReference type="Rhea" id="RHEA-COMP:9664"/>
        <dbReference type="Rhea" id="RHEA-COMP:9683"/>
        <dbReference type="ChEBI" id="CHEBI:30616"/>
        <dbReference type="ChEBI" id="CHEBI:33019"/>
        <dbReference type="ChEBI" id="CHEBI:57305"/>
        <dbReference type="ChEBI" id="CHEBI:78442"/>
        <dbReference type="ChEBI" id="CHEBI:78522"/>
        <dbReference type="ChEBI" id="CHEBI:456215"/>
        <dbReference type="EC" id="6.1.1.14"/>
    </reaction>
</comment>
<comment type="subunit">
    <text evidence="1">Tetramer of two alpha and two beta subunits.</text>
</comment>
<comment type="subcellular location">
    <subcellularLocation>
        <location evidence="1">Cytoplasm</location>
    </subcellularLocation>
</comment>
<comment type="similarity">
    <text evidence="1">Belongs to the class-II aminoacyl-tRNA synthetase family.</text>
</comment>
<feature type="chain" id="PRO_1000006422" description="Glycine--tRNA ligase beta subunit">
    <location>
        <begin position="1"/>
        <end position="689"/>
    </location>
</feature>
<protein>
    <recommendedName>
        <fullName evidence="1">Glycine--tRNA ligase beta subunit</fullName>
        <ecNumber evidence="1">6.1.1.14</ecNumber>
    </recommendedName>
    <alternativeName>
        <fullName evidence="1">Glycyl-tRNA synthetase beta subunit</fullName>
        <shortName evidence="1">GlyRS</shortName>
    </alternativeName>
</protein>
<evidence type="ECO:0000255" key="1">
    <source>
        <dbReference type="HAMAP-Rule" id="MF_00255"/>
    </source>
</evidence>
<organism>
    <name type="scientific">Yersinia enterocolitica serotype O:8 / biotype 1B (strain NCTC 13174 / 8081)</name>
    <dbReference type="NCBI Taxonomy" id="393305"/>
    <lineage>
        <taxon>Bacteria</taxon>
        <taxon>Pseudomonadati</taxon>
        <taxon>Pseudomonadota</taxon>
        <taxon>Gammaproteobacteria</taxon>
        <taxon>Enterobacterales</taxon>
        <taxon>Yersiniaceae</taxon>
        <taxon>Yersinia</taxon>
    </lineage>
</organism>